<reference key="1">
    <citation type="journal article" date="2006" name="Nat. Biotechnol.">
        <title>Complete genome of the mutualistic, N2-fixing grass endophyte Azoarcus sp. strain BH72.</title>
        <authorList>
            <person name="Krause A."/>
            <person name="Ramakumar A."/>
            <person name="Bartels D."/>
            <person name="Battistoni F."/>
            <person name="Bekel T."/>
            <person name="Boch J."/>
            <person name="Boehm M."/>
            <person name="Friedrich F."/>
            <person name="Hurek T."/>
            <person name="Krause L."/>
            <person name="Linke B."/>
            <person name="McHardy A.C."/>
            <person name="Sarkar A."/>
            <person name="Schneiker S."/>
            <person name="Syed A.A."/>
            <person name="Thauer R."/>
            <person name="Vorhoelter F.-J."/>
            <person name="Weidner S."/>
            <person name="Puehler A."/>
            <person name="Reinhold-Hurek B."/>
            <person name="Kaiser O."/>
            <person name="Goesmann A."/>
        </authorList>
    </citation>
    <scope>NUCLEOTIDE SEQUENCE [LARGE SCALE GENOMIC DNA]</scope>
    <source>
        <strain>BH72</strain>
    </source>
</reference>
<proteinExistence type="inferred from homology"/>
<organism>
    <name type="scientific">Azoarcus sp. (strain BH72)</name>
    <dbReference type="NCBI Taxonomy" id="418699"/>
    <lineage>
        <taxon>Bacteria</taxon>
        <taxon>Pseudomonadati</taxon>
        <taxon>Pseudomonadota</taxon>
        <taxon>Betaproteobacteria</taxon>
        <taxon>Rhodocyclales</taxon>
        <taxon>Zoogloeaceae</taxon>
        <taxon>Azoarcus</taxon>
    </lineage>
</organism>
<accession>A1K2E2</accession>
<evidence type="ECO:0000255" key="1">
    <source>
        <dbReference type="HAMAP-Rule" id="MF_00123"/>
    </source>
</evidence>
<name>SYR_AZOSB</name>
<feature type="chain" id="PRO_1000017986" description="Arginine--tRNA ligase">
    <location>
        <begin position="1"/>
        <end position="587"/>
    </location>
</feature>
<feature type="short sequence motif" description="'HIGH' region">
    <location>
        <begin position="126"/>
        <end position="136"/>
    </location>
</feature>
<keyword id="KW-0030">Aminoacyl-tRNA synthetase</keyword>
<keyword id="KW-0067">ATP-binding</keyword>
<keyword id="KW-0963">Cytoplasm</keyword>
<keyword id="KW-0436">Ligase</keyword>
<keyword id="KW-0547">Nucleotide-binding</keyword>
<keyword id="KW-0648">Protein biosynthesis</keyword>
<keyword id="KW-1185">Reference proteome</keyword>
<dbReference type="EC" id="6.1.1.19" evidence="1"/>
<dbReference type="EMBL" id="AM406670">
    <property type="protein sequence ID" value="CAL92997.1"/>
    <property type="molecule type" value="Genomic_DNA"/>
</dbReference>
<dbReference type="RefSeq" id="WP_011764115.1">
    <property type="nucleotide sequence ID" value="NC_008702.1"/>
</dbReference>
<dbReference type="SMR" id="A1K2E2"/>
<dbReference type="STRING" id="62928.azo0380"/>
<dbReference type="KEGG" id="azo:azo0380"/>
<dbReference type="eggNOG" id="COG0018">
    <property type="taxonomic scope" value="Bacteria"/>
</dbReference>
<dbReference type="HOGENOM" id="CLU_006406_0_1_4"/>
<dbReference type="Proteomes" id="UP000002588">
    <property type="component" value="Chromosome"/>
</dbReference>
<dbReference type="GO" id="GO:0005737">
    <property type="term" value="C:cytoplasm"/>
    <property type="evidence" value="ECO:0007669"/>
    <property type="project" value="UniProtKB-SubCell"/>
</dbReference>
<dbReference type="GO" id="GO:0004814">
    <property type="term" value="F:arginine-tRNA ligase activity"/>
    <property type="evidence" value="ECO:0007669"/>
    <property type="project" value="UniProtKB-UniRule"/>
</dbReference>
<dbReference type="GO" id="GO:0005524">
    <property type="term" value="F:ATP binding"/>
    <property type="evidence" value="ECO:0007669"/>
    <property type="project" value="UniProtKB-UniRule"/>
</dbReference>
<dbReference type="GO" id="GO:0006420">
    <property type="term" value="P:arginyl-tRNA aminoacylation"/>
    <property type="evidence" value="ECO:0007669"/>
    <property type="project" value="UniProtKB-UniRule"/>
</dbReference>
<dbReference type="CDD" id="cd00671">
    <property type="entry name" value="ArgRS_core"/>
    <property type="match status" value="1"/>
</dbReference>
<dbReference type="FunFam" id="1.10.730.10:FF:000008">
    <property type="entry name" value="Arginine--tRNA ligase"/>
    <property type="match status" value="1"/>
</dbReference>
<dbReference type="Gene3D" id="3.30.1360.70">
    <property type="entry name" value="Arginyl tRNA synthetase N-terminal domain"/>
    <property type="match status" value="1"/>
</dbReference>
<dbReference type="Gene3D" id="3.40.50.620">
    <property type="entry name" value="HUPs"/>
    <property type="match status" value="1"/>
</dbReference>
<dbReference type="Gene3D" id="1.10.730.10">
    <property type="entry name" value="Isoleucyl-tRNA Synthetase, Domain 1"/>
    <property type="match status" value="1"/>
</dbReference>
<dbReference type="HAMAP" id="MF_00123">
    <property type="entry name" value="Arg_tRNA_synth"/>
    <property type="match status" value="1"/>
</dbReference>
<dbReference type="InterPro" id="IPR001412">
    <property type="entry name" value="aa-tRNA-synth_I_CS"/>
</dbReference>
<dbReference type="InterPro" id="IPR001278">
    <property type="entry name" value="Arg-tRNA-ligase"/>
</dbReference>
<dbReference type="InterPro" id="IPR005148">
    <property type="entry name" value="Arg-tRNA-synth_N"/>
</dbReference>
<dbReference type="InterPro" id="IPR036695">
    <property type="entry name" value="Arg-tRNA-synth_N_sf"/>
</dbReference>
<dbReference type="InterPro" id="IPR035684">
    <property type="entry name" value="ArgRS_core"/>
</dbReference>
<dbReference type="InterPro" id="IPR008909">
    <property type="entry name" value="DALR_anticod-bd"/>
</dbReference>
<dbReference type="InterPro" id="IPR014729">
    <property type="entry name" value="Rossmann-like_a/b/a_fold"/>
</dbReference>
<dbReference type="InterPro" id="IPR009080">
    <property type="entry name" value="tRNAsynth_Ia_anticodon-bd"/>
</dbReference>
<dbReference type="NCBIfam" id="TIGR00456">
    <property type="entry name" value="argS"/>
    <property type="match status" value="1"/>
</dbReference>
<dbReference type="PANTHER" id="PTHR11956:SF5">
    <property type="entry name" value="ARGININE--TRNA LIGASE, CYTOPLASMIC"/>
    <property type="match status" value="1"/>
</dbReference>
<dbReference type="PANTHER" id="PTHR11956">
    <property type="entry name" value="ARGINYL-TRNA SYNTHETASE"/>
    <property type="match status" value="1"/>
</dbReference>
<dbReference type="Pfam" id="PF03485">
    <property type="entry name" value="Arg_tRNA_synt_N"/>
    <property type="match status" value="1"/>
</dbReference>
<dbReference type="Pfam" id="PF05746">
    <property type="entry name" value="DALR_1"/>
    <property type="match status" value="1"/>
</dbReference>
<dbReference type="Pfam" id="PF00750">
    <property type="entry name" value="tRNA-synt_1d"/>
    <property type="match status" value="2"/>
</dbReference>
<dbReference type="PRINTS" id="PR01038">
    <property type="entry name" value="TRNASYNTHARG"/>
</dbReference>
<dbReference type="SMART" id="SM01016">
    <property type="entry name" value="Arg_tRNA_synt_N"/>
    <property type="match status" value="1"/>
</dbReference>
<dbReference type="SMART" id="SM00836">
    <property type="entry name" value="DALR_1"/>
    <property type="match status" value="1"/>
</dbReference>
<dbReference type="SUPFAM" id="SSF47323">
    <property type="entry name" value="Anticodon-binding domain of a subclass of class I aminoacyl-tRNA synthetases"/>
    <property type="match status" value="1"/>
</dbReference>
<dbReference type="SUPFAM" id="SSF55190">
    <property type="entry name" value="Arginyl-tRNA synthetase (ArgRS), N-terminal 'additional' domain"/>
    <property type="match status" value="1"/>
</dbReference>
<dbReference type="SUPFAM" id="SSF52374">
    <property type="entry name" value="Nucleotidylyl transferase"/>
    <property type="match status" value="1"/>
</dbReference>
<dbReference type="PROSITE" id="PS00178">
    <property type="entry name" value="AA_TRNA_LIGASE_I"/>
    <property type="match status" value="1"/>
</dbReference>
<protein>
    <recommendedName>
        <fullName evidence="1">Arginine--tRNA ligase</fullName>
        <ecNumber evidence="1">6.1.1.19</ecNumber>
    </recommendedName>
    <alternativeName>
        <fullName evidence="1">Arginyl-tRNA synthetase</fullName>
        <shortName evidence="1">ArgRS</shortName>
    </alternativeName>
</protein>
<gene>
    <name evidence="1" type="primary">argS</name>
    <name type="ordered locus">azo0380</name>
</gene>
<sequence length="587" mass="64580">MSADPKVLLTDLIKTALKSVAPEHADTAILLERPKQASHGDFATNVALQLAKPLKRNPRELAALLLAELPASNLVAKTEVAGAGFINFTLAAAAKTAVVGEVLAKGADFGRGAKKNVKVQVEFVSANPTGPLHVGHGRGAAYGASLSDVLCFAGYDVTREYYVNDAGRQMDILALSTWLRYLALFGIDVPFPPNAYQGDYVIDMARGLRDAHQGRYAGVTLAQVLEGTPGLPVAERKDDEAKQQRELHLDGLIANAKRLLGEDYPFVHGFALNEQLGDGRDDLQEFGVHFDKWFSEKSLFDTGLVERAVAELEKRGHIYVQDGAKWFRSTDFGDEKDRVVQRENGLYTYFASDIAYHLNKYERGFDRIIDIWGADHHGYIPRVKGAIAALGLPPEKLEVALVQFAVLYRDGQKTSMSTRSGEFVTLRELRREVGNDACRFFYVLRKSDQHLDFDLDLAKSQSNENPVYYIQYAHARVCSVLNQWGGEPAELQAADLGKLENERELALCARLAGFPEVVQGAAADYAPHQIAFYLKDLAADFHSWYNAERMLVDDEAVKLARLALAAAVRSVLRGGLAVLGVSAPESM</sequence>
<comment type="catalytic activity">
    <reaction evidence="1">
        <text>tRNA(Arg) + L-arginine + ATP = L-arginyl-tRNA(Arg) + AMP + diphosphate</text>
        <dbReference type="Rhea" id="RHEA:20301"/>
        <dbReference type="Rhea" id="RHEA-COMP:9658"/>
        <dbReference type="Rhea" id="RHEA-COMP:9673"/>
        <dbReference type="ChEBI" id="CHEBI:30616"/>
        <dbReference type="ChEBI" id="CHEBI:32682"/>
        <dbReference type="ChEBI" id="CHEBI:33019"/>
        <dbReference type="ChEBI" id="CHEBI:78442"/>
        <dbReference type="ChEBI" id="CHEBI:78513"/>
        <dbReference type="ChEBI" id="CHEBI:456215"/>
        <dbReference type="EC" id="6.1.1.19"/>
    </reaction>
</comment>
<comment type="subunit">
    <text evidence="1">Monomer.</text>
</comment>
<comment type="subcellular location">
    <subcellularLocation>
        <location evidence="1">Cytoplasm</location>
    </subcellularLocation>
</comment>
<comment type="similarity">
    <text evidence="1">Belongs to the class-I aminoacyl-tRNA synthetase family.</text>
</comment>